<reference key="1">
    <citation type="journal article" date="1999" name="Biochim. Biophys. Acta">
        <title>Anandamide amidohydrolase of porcine brain: cDNA cloning, functional expression and site-directed mutagenesis.</title>
        <authorList>
            <person name="Goparaju S.K."/>
            <person name="Kurahashi Y."/>
            <person name="Suzuki H."/>
            <person name="Ueda N."/>
            <person name="Yamamoto S."/>
        </authorList>
    </citation>
    <scope>NUCLEOTIDE SEQUENCE [MRNA]</scope>
    <scope>MUTAGENESIS OF SER-217; SER-218; ASP-237; SER-241 AND CYS-249</scope>
    <scope>FUNCTION</scope>
    <scope>CATALYTIC ACTIVITY</scope>
    <scope>BIOPHYSICOCHEMICAL PROPERTIES</scope>
    <source>
        <tissue>Brain</tissue>
    </source>
</reference>
<reference key="2">
    <citation type="journal article" date="2002" name="Adv. Exp. Med. Biol.">
        <title>Catalytic properties of purified recombinant anandamide amidohydrolase.</title>
        <authorList>
            <person name="Ueda N."/>
            <person name="Katayama K."/>
            <person name="Goparaju S.K."/>
            <person name="Kurahashi Y."/>
            <person name="Yamanaka K."/>
            <person name="Suzuki H."/>
            <person name="Yamamoto S."/>
        </authorList>
    </citation>
    <scope>FUNCTION</scope>
    <scope>CATALYTIC ACTIVITY</scope>
</reference>
<proteinExistence type="evidence at protein level"/>
<accession>Q9TUI8</accession>
<comment type="function">
    <text evidence="3 6 7">Catalyzes the hydrolysis of endogenous amidated lipids like the sleep-inducing lipid oleamide ((9Z)-octadecenamide), the endocannabinoid anandamide (N-(5Z,8Z,11Z,14Z-eicosatetraenoyl)-ethanolamine), as well as other fatty amides, to their corresponding fatty acids, thereby regulating the signaling functions of these molecules (PubMed:10526230, PubMed:12664593). Also catalyzes the hydrolysis of the endocannabinoid 2-arachidonoylglycerol (2-(5Z,8Z,11Z,14Z-eicosatetraenoyl)-glycerol) (PubMed:10526230, PubMed:12664593). FAAH cooperates with PM20D1 in the hydrolysis of amino acid-conjugated fatty acids such as N-fatty acyl glycine and N-fatty acyl-L-serine, thereby acting as a physiological regulator of specific subsets of intracellular, but not of extracellular, N-fatty acyl amino acids (By similarity).</text>
</comment>
<comment type="catalytic activity">
    <reaction evidence="6 7">
        <text>N-(5Z,8Z,11Z,14Z-eicosatetraenoyl)-ethanolamine + H2O = ethanolamine + (5Z,8Z,11Z,14Z)-eicosatetraenoate</text>
        <dbReference type="Rhea" id="RHEA:26136"/>
        <dbReference type="ChEBI" id="CHEBI:2700"/>
        <dbReference type="ChEBI" id="CHEBI:15377"/>
        <dbReference type="ChEBI" id="CHEBI:32395"/>
        <dbReference type="ChEBI" id="CHEBI:57603"/>
        <dbReference type="EC" id="3.5.1.99"/>
    </reaction>
    <physiologicalReaction direction="left-to-right" evidence="6 7">
        <dbReference type="Rhea" id="RHEA:26137"/>
    </physiologicalReaction>
</comment>
<comment type="catalytic activity">
    <reaction evidence="6 7">
        <text>(9Z)-octadecenamide + H2O = (9Z)-octadecenoate + NH4(+)</text>
        <dbReference type="Rhea" id="RHEA:26506"/>
        <dbReference type="ChEBI" id="CHEBI:15377"/>
        <dbReference type="ChEBI" id="CHEBI:28938"/>
        <dbReference type="ChEBI" id="CHEBI:30823"/>
        <dbReference type="ChEBI" id="CHEBI:116314"/>
        <dbReference type="EC" id="3.5.1.99"/>
    </reaction>
    <physiologicalReaction direction="left-to-right" evidence="6 7">
        <dbReference type="Rhea" id="RHEA:26507"/>
    </physiologicalReaction>
</comment>
<comment type="catalytic activity">
    <reaction evidence="6 7">
        <text>2-(5Z,8Z,11Z,14Z-eicosatetraenoyl)-glycerol + H2O = glycerol + (5Z,8Z,11Z,14Z)-eicosatetraenoate + H(+)</text>
        <dbReference type="Rhea" id="RHEA:26132"/>
        <dbReference type="ChEBI" id="CHEBI:15377"/>
        <dbReference type="ChEBI" id="CHEBI:15378"/>
        <dbReference type="ChEBI" id="CHEBI:17754"/>
        <dbReference type="ChEBI" id="CHEBI:32395"/>
        <dbReference type="ChEBI" id="CHEBI:52392"/>
    </reaction>
    <physiologicalReaction direction="left-to-right" evidence="6 7">
        <dbReference type="Rhea" id="RHEA:26133"/>
    </physiologicalReaction>
</comment>
<comment type="catalytic activity">
    <reaction evidence="6">
        <text>1-O-methyl-(5Z,8Z,11Z,14Z)-eicosatetraenoate + H2O = methanol + (5Z,8Z,11Z,14Z)-eicosatetraenoate + H(+)</text>
        <dbReference type="Rhea" id="RHEA:63052"/>
        <dbReference type="ChEBI" id="CHEBI:15377"/>
        <dbReference type="ChEBI" id="CHEBI:15378"/>
        <dbReference type="ChEBI" id="CHEBI:17790"/>
        <dbReference type="ChEBI" id="CHEBI:32395"/>
        <dbReference type="ChEBI" id="CHEBI:78033"/>
    </reaction>
    <physiologicalReaction direction="left-to-right" evidence="6">
        <dbReference type="Rhea" id="RHEA:63053"/>
    </physiologicalReaction>
</comment>
<comment type="catalytic activity">
    <reaction evidence="4">
        <text>(9Z,12Z,15Z)-octadecatrienamide + H2O = (9Z,12Z,15Z)-octadecatrienoate + NH4(+)</text>
        <dbReference type="Rhea" id="RHEA:62976"/>
        <dbReference type="ChEBI" id="CHEBI:15377"/>
        <dbReference type="ChEBI" id="CHEBI:28938"/>
        <dbReference type="ChEBI" id="CHEBI:32387"/>
        <dbReference type="ChEBI" id="CHEBI:142684"/>
    </reaction>
    <physiologicalReaction direction="left-to-right" evidence="4">
        <dbReference type="Rhea" id="RHEA:62977"/>
    </physiologicalReaction>
</comment>
<comment type="catalytic activity">
    <reaction evidence="4">
        <text>(5Z,8Z,11Z,14Z)-eicosatetraenamide + H2O = (5Z,8Z,11Z,14Z)-eicosatetraenoate + NH4(+)</text>
        <dbReference type="Rhea" id="RHEA:63016"/>
        <dbReference type="ChEBI" id="CHEBI:15377"/>
        <dbReference type="ChEBI" id="CHEBI:28938"/>
        <dbReference type="ChEBI" id="CHEBI:32395"/>
        <dbReference type="ChEBI" id="CHEBI:137830"/>
    </reaction>
    <physiologicalReaction direction="left-to-right" evidence="4">
        <dbReference type="Rhea" id="RHEA:63017"/>
    </physiologicalReaction>
</comment>
<comment type="catalytic activity">
    <reaction evidence="4">
        <text>(6Z)-octadecenamide + H2O = (6Z)-octadecenoate + NH4(+)</text>
        <dbReference type="Rhea" id="RHEA:63008"/>
        <dbReference type="ChEBI" id="CHEBI:15377"/>
        <dbReference type="ChEBI" id="CHEBI:28938"/>
        <dbReference type="ChEBI" id="CHEBI:32375"/>
        <dbReference type="ChEBI" id="CHEBI:146168"/>
    </reaction>
    <physiologicalReaction direction="left-to-right" evidence="4">
        <dbReference type="Rhea" id="RHEA:63009"/>
    </physiologicalReaction>
</comment>
<comment type="catalytic activity">
    <reaction evidence="4">
        <text>(15Z)-tetracosenamide + H2O = (15Z)-tetracosenoate + NH4(+)</text>
        <dbReference type="Rhea" id="RHEA:63028"/>
        <dbReference type="ChEBI" id="CHEBI:15377"/>
        <dbReference type="ChEBI" id="CHEBI:28938"/>
        <dbReference type="ChEBI" id="CHEBI:32392"/>
        <dbReference type="ChEBI" id="CHEBI:146166"/>
    </reaction>
    <physiologicalReaction direction="left-to-right" evidence="4">
        <dbReference type="Rhea" id="RHEA:63029"/>
    </physiologicalReaction>
</comment>
<comment type="catalytic activity">
    <reaction evidence="4">
        <text>(8Z,11Z,14Z)-eicosatrienamide + H2O = (8Z,11Z,14Z)-eicosatrienoate + NH4(+)</text>
        <dbReference type="Rhea" id="RHEA:62996"/>
        <dbReference type="ChEBI" id="CHEBI:15377"/>
        <dbReference type="ChEBI" id="CHEBI:28938"/>
        <dbReference type="ChEBI" id="CHEBI:71589"/>
        <dbReference type="ChEBI" id="CHEBI:146163"/>
    </reaction>
    <physiologicalReaction direction="left-to-right" evidence="4">
        <dbReference type="Rhea" id="RHEA:62997"/>
    </physiologicalReaction>
</comment>
<comment type="catalytic activity">
    <reaction evidence="4">
        <text>(11Z,14Z,17Z)-eicosatrienamide + H2O = (11Z,14Z,17Z)-eicosatrienoate + NH4(+)</text>
        <dbReference type="Rhea" id="RHEA:63000"/>
        <dbReference type="ChEBI" id="CHEBI:15377"/>
        <dbReference type="ChEBI" id="CHEBI:28938"/>
        <dbReference type="ChEBI" id="CHEBI:77223"/>
        <dbReference type="ChEBI" id="CHEBI:146164"/>
    </reaction>
    <physiologicalReaction direction="left-to-right" evidence="4">
        <dbReference type="Rhea" id="RHEA:63001"/>
    </physiologicalReaction>
</comment>
<comment type="catalytic activity">
    <reaction evidence="4">
        <text>(11Z,14Z)-eicosadienamide + H2O = (11Z,14Z)-eicosadienoate + NH4(+)</text>
        <dbReference type="Rhea" id="RHEA:63004"/>
        <dbReference type="ChEBI" id="CHEBI:15377"/>
        <dbReference type="ChEBI" id="CHEBI:28938"/>
        <dbReference type="ChEBI" id="CHEBI:77220"/>
        <dbReference type="ChEBI" id="CHEBI:146165"/>
    </reaction>
    <physiologicalReaction direction="left-to-right" evidence="4">
        <dbReference type="Rhea" id="RHEA:63005"/>
    </physiologicalReaction>
</comment>
<comment type="catalytic activity">
    <reaction evidence="4">
        <text>(9Z,12Z)-octadecadienamide + H2O = (9Z,12Z)-octadecadienoate + NH4(+)</text>
        <dbReference type="Rhea" id="RHEA:63020"/>
        <dbReference type="ChEBI" id="CHEBI:15377"/>
        <dbReference type="ChEBI" id="CHEBI:28938"/>
        <dbReference type="ChEBI" id="CHEBI:30245"/>
        <dbReference type="ChEBI" id="CHEBI:82984"/>
    </reaction>
    <physiologicalReaction direction="left-to-right" evidence="4">
        <dbReference type="Rhea" id="RHEA:63021"/>
    </physiologicalReaction>
</comment>
<comment type="catalytic activity">
    <reaction evidence="4">
        <text>tetradecamide + H2O = tetradecanoate + NH4(+)</text>
        <dbReference type="Rhea" id="RHEA:62992"/>
        <dbReference type="ChEBI" id="CHEBI:15377"/>
        <dbReference type="ChEBI" id="CHEBI:28938"/>
        <dbReference type="ChEBI" id="CHEBI:30807"/>
        <dbReference type="ChEBI" id="CHEBI:137125"/>
    </reaction>
    <physiologicalReaction direction="left-to-right" evidence="4">
        <dbReference type="Rhea" id="RHEA:62993"/>
    </physiologicalReaction>
</comment>
<comment type="catalytic activity">
    <reaction evidence="4">
        <text>N-(9Z-octadecenoyl) ethanolamine + H2O = ethanolamine + (9Z)-octadecenoate</text>
        <dbReference type="Rhea" id="RHEA:45060"/>
        <dbReference type="ChEBI" id="CHEBI:15377"/>
        <dbReference type="ChEBI" id="CHEBI:30823"/>
        <dbReference type="ChEBI" id="CHEBI:57603"/>
        <dbReference type="ChEBI" id="CHEBI:71466"/>
    </reaction>
    <physiologicalReaction direction="left-to-right" evidence="4">
        <dbReference type="Rhea" id="RHEA:45061"/>
    </physiologicalReaction>
</comment>
<comment type="catalytic activity">
    <reaction evidence="4">
        <text>N-(9Z-octadecenoyl)-taurine + H2O = taurine + (9Z)-octadecenoate</text>
        <dbReference type="Rhea" id="RHEA:63148"/>
        <dbReference type="ChEBI" id="CHEBI:15377"/>
        <dbReference type="ChEBI" id="CHEBI:30823"/>
        <dbReference type="ChEBI" id="CHEBI:146191"/>
        <dbReference type="ChEBI" id="CHEBI:507393"/>
    </reaction>
    <physiologicalReaction direction="left-to-right" evidence="4">
        <dbReference type="Rhea" id="RHEA:63149"/>
    </physiologicalReaction>
</comment>
<comment type="catalytic activity">
    <reaction evidence="4">
        <text>(11Z)-eicosenamide + H2O = (11Z)-eicosenoate + NH4(+)</text>
        <dbReference type="Rhea" id="RHEA:63120"/>
        <dbReference type="ChEBI" id="CHEBI:15377"/>
        <dbReference type="ChEBI" id="CHEBI:28938"/>
        <dbReference type="ChEBI" id="CHEBI:32426"/>
        <dbReference type="ChEBI" id="CHEBI:146167"/>
    </reaction>
    <physiologicalReaction direction="left-to-right" evidence="4">
        <dbReference type="Rhea" id="RHEA:63121"/>
    </physiologicalReaction>
</comment>
<comment type="catalytic activity">
    <reaction evidence="3">
        <text>N-(9Z-hexadecenoyl) ethanolamine + H2O = (9Z)-hexadecenoate + ethanolamine</text>
        <dbReference type="Rhea" id="RHEA:35563"/>
        <dbReference type="ChEBI" id="CHEBI:15377"/>
        <dbReference type="ChEBI" id="CHEBI:32372"/>
        <dbReference type="ChEBI" id="CHEBI:57603"/>
        <dbReference type="ChEBI" id="CHEBI:71465"/>
    </reaction>
    <physiologicalReaction direction="left-to-right" evidence="3">
        <dbReference type="Rhea" id="RHEA:35564"/>
    </physiologicalReaction>
</comment>
<comment type="catalytic activity">
    <reaction evidence="3">
        <text>N-octadecanoyl ethanolamine + H2O = octadecanoate + ethanolamine</text>
        <dbReference type="Rhea" id="RHEA:63124"/>
        <dbReference type="ChEBI" id="CHEBI:15377"/>
        <dbReference type="ChEBI" id="CHEBI:25629"/>
        <dbReference type="ChEBI" id="CHEBI:57603"/>
        <dbReference type="ChEBI" id="CHEBI:85299"/>
    </reaction>
    <physiologicalReaction direction="left-to-right" evidence="3">
        <dbReference type="Rhea" id="RHEA:63125"/>
    </physiologicalReaction>
</comment>
<comment type="catalytic activity">
    <reaction evidence="3">
        <text>N-docosanoyl-ethanolamine + H2O = docosanoate + ethanolamine</text>
        <dbReference type="Rhea" id="RHEA:63128"/>
        <dbReference type="ChEBI" id="CHEBI:15377"/>
        <dbReference type="ChEBI" id="CHEBI:23858"/>
        <dbReference type="ChEBI" id="CHEBI:57603"/>
        <dbReference type="ChEBI" id="CHEBI:146186"/>
    </reaction>
    <physiologicalReaction direction="left-to-right" evidence="3">
        <dbReference type="Rhea" id="RHEA:63129"/>
    </physiologicalReaction>
</comment>
<comment type="catalytic activity">
    <reaction evidence="3">
        <text>N-tetracosanoyl-taurine + H2O = tetracosanoate + taurine</text>
        <dbReference type="Rhea" id="RHEA:63140"/>
        <dbReference type="ChEBI" id="CHEBI:15377"/>
        <dbReference type="ChEBI" id="CHEBI:31014"/>
        <dbReference type="ChEBI" id="CHEBI:132049"/>
        <dbReference type="ChEBI" id="CHEBI:507393"/>
    </reaction>
    <physiologicalReaction direction="left-to-right" evidence="3">
        <dbReference type="Rhea" id="RHEA:63141"/>
    </physiologicalReaction>
</comment>
<comment type="catalytic activity">
    <reaction evidence="3">
        <text>N-(15Z-tetracosenoyl)-ethanolamine + H2O = (15Z)-tetracosenoate + ethanolamine</text>
        <dbReference type="Rhea" id="RHEA:63144"/>
        <dbReference type="ChEBI" id="CHEBI:15377"/>
        <dbReference type="ChEBI" id="CHEBI:32392"/>
        <dbReference type="ChEBI" id="CHEBI:57603"/>
        <dbReference type="ChEBI" id="CHEBI:146187"/>
    </reaction>
    <physiologicalReaction direction="left-to-right" evidence="3">
        <dbReference type="Rhea" id="RHEA:63145"/>
    </physiologicalReaction>
</comment>
<comment type="catalytic activity">
    <reaction evidence="3">
        <text>N-docosanoyl-taurine + H2O = docosanoate + taurine</text>
        <dbReference type="Rhea" id="RHEA:63156"/>
        <dbReference type="ChEBI" id="CHEBI:15377"/>
        <dbReference type="ChEBI" id="CHEBI:23858"/>
        <dbReference type="ChEBI" id="CHEBI:146196"/>
        <dbReference type="ChEBI" id="CHEBI:507393"/>
    </reaction>
    <physiologicalReaction direction="left-to-right" evidence="3">
        <dbReference type="Rhea" id="RHEA:63157"/>
    </physiologicalReaction>
</comment>
<comment type="catalytic activity">
    <reaction evidence="3">
        <text>N-(15Z-tetracosenoyl)-taurine + H2O = (15Z)-tetracosenoate + taurine</text>
        <dbReference type="Rhea" id="RHEA:63160"/>
        <dbReference type="ChEBI" id="CHEBI:15377"/>
        <dbReference type="ChEBI" id="CHEBI:32392"/>
        <dbReference type="ChEBI" id="CHEBI:146198"/>
        <dbReference type="ChEBI" id="CHEBI:507393"/>
    </reaction>
    <physiologicalReaction direction="left-to-right" evidence="3">
        <dbReference type="Rhea" id="RHEA:63161"/>
    </physiologicalReaction>
</comment>
<comment type="catalytic activity">
    <reaction evidence="3">
        <text>N-tricosanoyl-taurine + H2O = tricosanoate + taurine</text>
        <dbReference type="Rhea" id="RHEA:63164"/>
        <dbReference type="ChEBI" id="CHEBI:15377"/>
        <dbReference type="ChEBI" id="CHEBI:79007"/>
        <dbReference type="ChEBI" id="CHEBI:146197"/>
        <dbReference type="ChEBI" id="CHEBI:507393"/>
    </reaction>
    <physiologicalReaction direction="left-to-right" evidence="3">
        <dbReference type="Rhea" id="RHEA:63165"/>
    </physiologicalReaction>
</comment>
<comment type="catalytic activity">
    <reaction evidence="3">
        <text>(9Z)-octadecenoate + glycine = N-(9Z-octadecenoyl)glycine + H2O</text>
        <dbReference type="Rhea" id="RHEA:51316"/>
        <dbReference type="ChEBI" id="CHEBI:15377"/>
        <dbReference type="ChEBI" id="CHEBI:30823"/>
        <dbReference type="ChEBI" id="CHEBI:57305"/>
        <dbReference type="ChEBI" id="CHEBI:133992"/>
    </reaction>
    <physiologicalReaction direction="right-to-left" evidence="3">
        <dbReference type="Rhea" id="RHEA:51318"/>
    </physiologicalReaction>
</comment>
<comment type="catalytic activity">
    <reaction evidence="3">
        <text>N-(5Z,8Z,11Z,14Z)-eicosatetraenoyl-glycine + H2O = (5Z,8Z,11Z,14Z)-eicosatetraenoate + glycine</text>
        <dbReference type="Rhea" id="RHEA:64108"/>
        <dbReference type="ChEBI" id="CHEBI:15377"/>
        <dbReference type="ChEBI" id="CHEBI:32395"/>
        <dbReference type="ChEBI" id="CHEBI:57305"/>
        <dbReference type="ChEBI" id="CHEBI:59002"/>
    </reaction>
    <physiologicalReaction direction="left-to-right" evidence="3">
        <dbReference type="Rhea" id="RHEA:64109"/>
    </physiologicalReaction>
</comment>
<comment type="catalytic activity">
    <reaction evidence="3">
        <text>N-(5Z,8Z,11Z,14Z-eicosatetraenoyl)-L-serine + H2O = (5Z,8Z,11Z,14Z)-eicosatetraenoate + L-serine</text>
        <dbReference type="Rhea" id="RHEA:64116"/>
        <dbReference type="ChEBI" id="CHEBI:15377"/>
        <dbReference type="ChEBI" id="CHEBI:32395"/>
        <dbReference type="ChEBI" id="CHEBI:33384"/>
        <dbReference type="ChEBI" id="CHEBI:149697"/>
    </reaction>
    <physiologicalReaction direction="left-to-right" evidence="3">
        <dbReference type="Rhea" id="RHEA:64117"/>
    </physiologicalReaction>
</comment>
<comment type="activity regulation">
    <text evidence="4">inhibited by trifluoromethyl ketone.</text>
</comment>
<comment type="biophysicochemical properties">
    <kinetics>
        <Vmax evidence="6">65.0 nmol/min/mg enzyme for the hydrolysis of oleamide ((9Z)-octadecenamide)</Vmax>
        <Vmax evidence="6">733.0 nmol/min/mg enzyme for the hydrolysis of 2-arachidonoylglycerol (2-(5Z,8Z,11Z,14Z-eicosatetraenoyl)-glycerol)</Vmax>
        <Vmax evidence="6">118.0 nmol/min/mg enzyme for the hydrolysis of methyl ester of arachidonic acid (1-O-methyl-(5Z,8Z,11Z,14Z)-eicosatetraenoate)</Vmax>
        <Vmax evidence="6">207.0 nmol/min/mg enzyme for the hydrolysis of anandamide (N-(5Z,8Z,11Z,14Z-eicosatetraenoyl)-ethanolamine)</Vmax>
    </kinetics>
</comment>
<comment type="subunit">
    <text evidence="4">Homodimer.</text>
</comment>
<comment type="subcellular location">
    <subcellularLocation>
        <location evidence="4">Endoplasmic reticulum membrane</location>
        <topology evidence="4">Single-pass membrane protein</topology>
    </subcellularLocation>
    <subcellularLocation>
        <location evidence="4">Golgi apparatus membrane</location>
        <topology evidence="4">Single-pass membrane protein</topology>
    </subcellularLocation>
    <text evidence="4">Seems to be associated with the endoplasmic reticulum and/or Golgi apparatus.</text>
</comment>
<comment type="similarity">
    <text evidence="8">Belongs to the amidase family.</text>
</comment>
<protein>
    <recommendedName>
        <fullName>Fatty-acid amide hydrolase 1</fullName>
        <ecNumber evidence="6 7">3.5.1.99</ecNumber>
    </recommendedName>
    <alternativeName>
        <fullName>Anandamide amidase</fullName>
    </alternativeName>
    <alternativeName>
        <fullName>Anandamide amidohydrolase 1</fullName>
    </alternativeName>
    <alternativeName>
        <fullName>Fatty acid ester hydrolase</fullName>
        <ecNumber evidence="6 7">3.1.1.-</ecNumber>
    </alternativeName>
    <alternativeName>
        <fullName>Oleamide hydrolase 1</fullName>
    </alternativeName>
</protein>
<evidence type="ECO:0000250" key="1"/>
<evidence type="ECO:0000250" key="2">
    <source>
        <dbReference type="UniProtKB" id="O00519"/>
    </source>
</evidence>
<evidence type="ECO:0000250" key="3">
    <source>
        <dbReference type="UniProtKB" id="O08914"/>
    </source>
</evidence>
<evidence type="ECO:0000250" key="4">
    <source>
        <dbReference type="UniProtKB" id="P97612"/>
    </source>
</evidence>
<evidence type="ECO:0000255" key="5"/>
<evidence type="ECO:0000269" key="6">
    <source>
    </source>
</evidence>
<evidence type="ECO:0000269" key="7">
    <source>
    </source>
</evidence>
<evidence type="ECO:0000305" key="8"/>
<name>FAAH1_PIG</name>
<gene>
    <name type="primary">FAAH</name>
    <name type="synonym">FAAH1</name>
</gene>
<organism>
    <name type="scientific">Sus scrofa</name>
    <name type="common">Pig</name>
    <dbReference type="NCBI Taxonomy" id="9823"/>
    <lineage>
        <taxon>Eukaryota</taxon>
        <taxon>Metazoa</taxon>
        <taxon>Chordata</taxon>
        <taxon>Craniata</taxon>
        <taxon>Vertebrata</taxon>
        <taxon>Euteleostomi</taxon>
        <taxon>Mammalia</taxon>
        <taxon>Eutheria</taxon>
        <taxon>Laurasiatheria</taxon>
        <taxon>Artiodactyla</taxon>
        <taxon>Suina</taxon>
        <taxon>Suidae</taxon>
        <taxon>Sus</taxon>
    </lineage>
</organism>
<sequence length="579" mass="62857">MVQEELWAAFSGPSGVALACCLVAAALALRWSSRRMARGAAARARQRQQAALETMDKAAQRFRLQNPDLDSEMLLALPLPQLVQKVRSGELSPEAVLFSYLQKAWEVNRGTNCVTTYLADCEAQLCQAPGQGLLYGVPVSLKECFSCKGHDSTLGLSRNQGTPAECDCVVVQVLKLQGAVPFVHTNVPQSMFSYDCSNPLFGQTTNPWMSSKSPGGSSGGEGALIAAGGSPLGLGTDIGGSIRFPSAFCGICGIKPTGNRISKSGLKGSVYGQVAVQLSVGPMARDVESLALCLRALLCEDMFRLDPTVPPLPFNEEVYASSRPLRVGYYETDNYTMPTPAMRRALLETKRSLEAAGHTLIPFLPANIPHALEALSTGGLFSDGGKRLLQNFEGDYVDSCLGDLISILRLPKWLKGLLAFMLRPLLPRLAGFLSSLRPRSAGKLWELQHEIEMYRHSVIAQWRALDLDVVLTPMLSPALDLNAPGKATGAVSYTLLYNCLDFPAGVVPVTTVTAEDEAQMEHYKGYFGDIWDKVVQKAMKRSVGLPVAVQCVALPWQEELCLRFMREVERLMAPGRQPS</sequence>
<keyword id="KW-0256">Endoplasmic reticulum</keyword>
<keyword id="KW-0333">Golgi apparatus</keyword>
<keyword id="KW-0378">Hydrolase</keyword>
<keyword id="KW-0442">Lipid degradation</keyword>
<keyword id="KW-0443">Lipid metabolism</keyword>
<keyword id="KW-0472">Membrane</keyword>
<keyword id="KW-0597">Phosphoprotein</keyword>
<keyword id="KW-1185">Reference proteome</keyword>
<keyword id="KW-0812">Transmembrane</keyword>
<keyword id="KW-1133">Transmembrane helix</keyword>
<feature type="chain" id="PRO_0000105266" description="Fatty-acid amide hydrolase 1">
    <location>
        <begin position="1"/>
        <end position="579"/>
    </location>
</feature>
<feature type="transmembrane region" description="Helical" evidence="5">
    <location>
        <begin position="9"/>
        <end position="29"/>
    </location>
</feature>
<feature type="topological domain" description="Cytoplasmic" evidence="1">
    <location>
        <begin position="30"/>
        <end position="403"/>
    </location>
</feature>
<feature type="intramembrane region" evidence="1">
    <location>
        <begin position="404"/>
        <end position="433"/>
    </location>
</feature>
<feature type="topological domain" description="Cytoplasmic" evidence="1">
    <location>
        <begin position="434"/>
        <end position="579"/>
    </location>
</feature>
<feature type="active site" description="Charge relay system" evidence="1">
    <location>
        <position position="142"/>
    </location>
</feature>
<feature type="active site" description="Charge relay system" evidence="1">
    <location>
        <position position="217"/>
    </location>
</feature>
<feature type="active site" description="Acyl-ester intermediate" evidence="1">
    <location>
        <position position="241"/>
    </location>
</feature>
<feature type="binding site" evidence="1">
    <location>
        <position position="191"/>
    </location>
    <ligand>
        <name>substrate</name>
    </ligand>
</feature>
<feature type="binding site" evidence="1">
    <location>
        <position position="217"/>
    </location>
    <ligand>
        <name>substrate</name>
    </ligand>
</feature>
<feature type="binding site" evidence="1">
    <location>
        <begin position="238"/>
        <end position="241"/>
    </location>
    <ligand>
        <name>substrate</name>
    </ligand>
</feature>
<feature type="modified residue" description="Phosphoserine" evidence="2">
    <location>
        <position position="241"/>
    </location>
</feature>
<feature type="mutagenesis site" description="Loss of activity." evidence="6">
    <original>S</original>
    <variation>A</variation>
    <location>
        <position position="217"/>
    </location>
</feature>
<feature type="mutagenesis site" description="Lowers activity by at least 98%." evidence="6">
    <original>S</original>
    <variation>A</variation>
    <location>
        <position position="218"/>
    </location>
</feature>
<feature type="mutagenesis site" description="Loss of activity." evidence="6">
    <original>D</original>
    <variation>E</variation>
    <variation>N</variation>
    <location>
        <position position="237"/>
    </location>
</feature>
<feature type="mutagenesis site" description="Loss of activity." evidence="6">
    <original>S</original>
    <variation>A</variation>
    <location>
        <position position="241"/>
    </location>
</feature>
<feature type="mutagenesis site" description="Loss of activity." evidence="6">
    <original>C</original>
    <variation>A</variation>
    <location>
        <position position="249"/>
    </location>
</feature>
<dbReference type="EC" id="3.5.1.99" evidence="6 7"/>
<dbReference type="EC" id="3.1.1.-" evidence="6 7"/>
<dbReference type="EMBL" id="AB027132">
    <property type="protein sequence ID" value="BAA86917.1"/>
    <property type="molecule type" value="mRNA"/>
</dbReference>
<dbReference type="RefSeq" id="NP_999079.1">
    <property type="nucleotide sequence ID" value="NM_213914.1"/>
</dbReference>
<dbReference type="SMR" id="Q9TUI8"/>
<dbReference type="FunCoup" id="Q9TUI8">
    <property type="interactions" value="83"/>
</dbReference>
<dbReference type="STRING" id="9823.ENSSSCP00000050676"/>
<dbReference type="ChEMBL" id="CHEMBL4295969"/>
<dbReference type="GlyGen" id="Q9TUI8">
    <property type="glycosylation" value="1 site"/>
</dbReference>
<dbReference type="PaxDb" id="9823-ENSSSCP00000004216"/>
<dbReference type="PeptideAtlas" id="Q9TUI8"/>
<dbReference type="Ensembl" id="ENSSSCT00030033806.1">
    <property type="protein sequence ID" value="ENSSSCP00030015282.1"/>
    <property type="gene ID" value="ENSSSCG00030024291.1"/>
</dbReference>
<dbReference type="Ensembl" id="ENSSSCT00035018848.1">
    <property type="protein sequence ID" value="ENSSSCP00035006628.1"/>
    <property type="gene ID" value="ENSSSCG00035014837.1"/>
</dbReference>
<dbReference type="Ensembl" id="ENSSSCT00060027540.1">
    <property type="protein sequence ID" value="ENSSSCP00060011758.1"/>
    <property type="gene ID" value="ENSSSCG00060020342.1"/>
</dbReference>
<dbReference type="Ensembl" id="ENSSSCT00085027797">
    <property type="protein sequence ID" value="ENSSSCP00085019025"/>
    <property type="gene ID" value="ENSSSCG00085014739"/>
</dbReference>
<dbReference type="GeneID" id="396949"/>
<dbReference type="KEGG" id="ssc:396949"/>
<dbReference type="CTD" id="2166"/>
<dbReference type="eggNOG" id="KOG1212">
    <property type="taxonomic scope" value="Eukaryota"/>
</dbReference>
<dbReference type="InParanoid" id="Q9TUI8"/>
<dbReference type="OrthoDB" id="6428749at2759"/>
<dbReference type="BRENDA" id="3.5.1.4">
    <property type="organism ID" value="6170"/>
</dbReference>
<dbReference type="Reactome" id="R-SSC-2142753">
    <property type="pathway name" value="Arachidonate metabolism"/>
</dbReference>
<dbReference type="Proteomes" id="UP000008227">
    <property type="component" value="Unplaced"/>
</dbReference>
<dbReference type="Proteomes" id="UP000314985">
    <property type="component" value="Unplaced"/>
</dbReference>
<dbReference type="Proteomes" id="UP000694570">
    <property type="component" value="Unplaced"/>
</dbReference>
<dbReference type="Proteomes" id="UP000694571">
    <property type="component" value="Unplaced"/>
</dbReference>
<dbReference type="Proteomes" id="UP000694720">
    <property type="component" value="Unplaced"/>
</dbReference>
<dbReference type="Proteomes" id="UP000694722">
    <property type="component" value="Unplaced"/>
</dbReference>
<dbReference type="Proteomes" id="UP000694723">
    <property type="component" value="Unplaced"/>
</dbReference>
<dbReference type="Proteomes" id="UP000694724">
    <property type="component" value="Unplaced"/>
</dbReference>
<dbReference type="Proteomes" id="UP000694725">
    <property type="component" value="Unplaced"/>
</dbReference>
<dbReference type="Proteomes" id="UP000694726">
    <property type="component" value="Unplaced"/>
</dbReference>
<dbReference type="Proteomes" id="UP000694727">
    <property type="component" value="Unplaced"/>
</dbReference>
<dbReference type="Proteomes" id="UP000694728">
    <property type="component" value="Unplaced"/>
</dbReference>
<dbReference type="GO" id="GO:0005789">
    <property type="term" value="C:endoplasmic reticulum membrane"/>
    <property type="evidence" value="ECO:0007669"/>
    <property type="project" value="UniProtKB-SubCell"/>
</dbReference>
<dbReference type="GO" id="GO:0000139">
    <property type="term" value="C:Golgi membrane"/>
    <property type="evidence" value="ECO:0007669"/>
    <property type="project" value="UniProtKB-SubCell"/>
</dbReference>
<dbReference type="GO" id="GO:0031090">
    <property type="term" value="C:organelle membrane"/>
    <property type="evidence" value="ECO:0000250"/>
    <property type="project" value="UniProtKB"/>
</dbReference>
<dbReference type="GO" id="GO:0004040">
    <property type="term" value="F:amidase activity"/>
    <property type="evidence" value="ECO:0000318"/>
    <property type="project" value="GO_Central"/>
</dbReference>
<dbReference type="GO" id="GO:0017064">
    <property type="term" value="F:fatty acid amide hydrolase activity"/>
    <property type="evidence" value="ECO:0000250"/>
    <property type="project" value="UniProtKB"/>
</dbReference>
<dbReference type="GO" id="GO:0047372">
    <property type="term" value="F:monoacylglycerol lipase activity"/>
    <property type="evidence" value="ECO:0000250"/>
    <property type="project" value="UniProtKB"/>
</dbReference>
<dbReference type="GO" id="GO:0009062">
    <property type="term" value="P:fatty acid catabolic process"/>
    <property type="evidence" value="ECO:0000250"/>
    <property type="project" value="UniProtKB"/>
</dbReference>
<dbReference type="GO" id="GO:0052651">
    <property type="term" value="P:monoacylglycerol catabolic process"/>
    <property type="evidence" value="ECO:0000250"/>
    <property type="project" value="UniProtKB"/>
</dbReference>
<dbReference type="FunFam" id="3.90.1300.10:FF:000001">
    <property type="entry name" value="Fatty-acid amide hydrolase 1"/>
    <property type="match status" value="1"/>
</dbReference>
<dbReference type="Gene3D" id="3.90.1300.10">
    <property type="entry name" value="Amidase signature (AS) domain"/>
    <property type="match status" value="1"/>
</dbReference>
<dbReference type="InterPro" id="IPR020556">
    <property type="entry name" value="Amidase_CS"/>
</dbReference>
<dbReference type="InterPro" id="IPR023631">
    <property type="entry name" value="Amidase_dom"/>
</dbReference>
<dbReference type="InterPro" id="IPR036928">
    <property type="entry name" value="AS_sf"/>
</dbReference>
<dbReference type="InterPro" id="IPR052096">
    <property type="entry name" value="Endocannabinoid_amidase"/>
</dbReference>
<dbReference type="PANTHER" id="PTHR45847">
    <property type="entry name" value="FATTY ACID AMIDE HYDROLASE"/>
    <property type="match status" value="1"/>
</dbReference>
<dbReference type="PANTHER" id="PTHR45847:SF3">
    <property type="entry name" value="FATTY-ACID AMIDE HYDROLASE 1"/>
    <property type="match status" value="1"/>
</dbReference>
<dbReference type="Pfam" id="PF01425">
    <property type="entry name" value="Amidase"/>
    <property type="match status" value="1"/>
</dbReference>
<dbReference type="PIRSF" id="PIRSF001221">
    <property type="entry name" value="Amidase_fungi"/>
    <property type="match status" value="1"/>
</dbReference>
<dbReference type="SUPFAM" id="SSF75304">
    <property type="entry name" value="Amidase signature (AS) enzymes"/>
    <property type="match status" value="1"/>
</dbReference>
<dbReference type="PROSITE" id="PS00571">
    <property type="entry name" value="AMIDASES"/>
    <property type="match status" value="1"/>
</dbReference>